<sequence length="129" mass="14307">MDPESRRLFNVRKVQKGKKPQFKRTCSHKFKRLDDNWRRPRGSQGKQRRKYVSKGALVQVGYGSPAAVKGLHPSGYSDVLISSIAELELVDPSYEAIRIAGTIGAQKKALILAKAEEAGIKVLNSGRSE</sequence>
<dbReference type="EMBL" id="AE010299">
    <property type="protein sequence ID" value="AAM04514.1"/>
    <property type="status" value="ALT_INIT"/>
    <property type="molecule type" value="Genomic_DNA"/>
</dbReference>
<dbReference type="SMR" id="Q8TRT0"/>
<dbReference type="FunCoup" id="Q8TRT0">
    <property type="interactions" value="183"/>
</dbReference>
<dbReference type="STRING" id="188937.MA_1089"/>
<dbReference type="EnsemblBacteria" id="AAM04514">
    <property type="protein sequence ID" value="AAM04514"/>
    <property type="gene ID" value="MA_1089"/>
</dbReference>
<dbReference type="KEGG" id="mac:MA_1089"/>
<dbReference type="HOGENOM" id="CLU_071479_3_1_2"/>
<dbReference type="InParanoid" id="Q8TRT0"/>
<dbReference type="OrthoDB" id="372100at2157"/>
<dbReference type="PhylomeDB" id="Q8TRT0"/>
<dbReference type="Proteomes" id="UP000002487">
    <property type="component" value="Chromosome"/>
</dbReference>
<dbReference type="GO" id="GO:0022625">
    <property type="term" value="C:cytosolic large ribosomal subunit"/>
    <property type="evidence" value="ECO:0000318"/>
    <property type="project" value="GO_Central"/>
</dbReference>
<dbReference type="GO" id="GO:0003735">
    <property type="term" value="F:structural constituent of ribosome"/>
    <property type="evidence" value="ECO:0007669"/>
    <property type="project" value="InterPro"/>
</dbReference>
<dbReference type="GO" id="GO:0006412">
    <property type="term" value="P:translation"/>
    <property type="evidence" value="ECO:0007669"/>
    <property type="project" value="UniProtKB-UniRule"/>
</dbReference>
<dbReference type="CDD" id="cd00513">
    <property type="entry name" value="Ribosomal_L32_L32e"/>
    <property type="match status" value="1"/>
</dbReference>
<dbReference type="HAMAP" id="MF_00810">
    <property type="entry name" value="Ribosomal_eL32"/>
    <property type="match status" value="1"/>
</dbReference>
<dbReference type="InterPro" id="IPR001515">
    <property type="entry name" value="Ribosomal_eL32"/>
</dbReference>
<dbReference type="InterPro" id="IPR023654">
    <property type="entry name" value="Ribosomal_eL32_arc"/>
</dbReference>
<dbReference type="InterPro" id="IPR018263">
    <property type="entry name" value="Ribosomal_eL32_CS"/>
</dbReference>
<dbReference type="InterPro" id="IPR036351">
    <property type="entry name" value="Ribosomal_eL32_sf"/>
</dbReference>
<dbReference type="NCBIfam" id="NF006332">
    <property type="entry name" value="PRK08562.1"/>
    <property type="match status" value="1"/>
</dbReference>
<dbReference type="PANTHER" id="PTHR23413">
    <property type="entry name" value="60S RIBOSOMAL PROTEIN L32 AND DNA-DIRECTED RNA POLYMERASE II, SUBUNIT N"/>
    <property type="match status" value="1"/>
</dbReference>
<dbReference type="PANTHER" id="PTHR23413:SF1">
    <property type="entry name" value="RIBOSOMAL PROTEIN L32"/>
    <property type="match status" value="1"/>
</dbReference>
<dbReference type="Pfam" id="PF01655">
    <property type="entry name" value="Ribosomal_L32e"/>
    <property type="match status" value="1"/>
</dbReference>
<dbReference type="SMART" id="SM01393">
    <property type="entry name" value="Ribosomal_L32e"/>
    <property type="match status" value="1"/>
</dbReference>
<dbReference type="SUPFAM" id="SSF52042">
    <property type="entry name" value="Ribosomal protein L32e"/>
    <property type="match status" value="1"/>
</dbReference>
<dbReference type="PROSITE" id="PS00580">
    <property type="entry name" value="RIBOSOMAL_L32E"/>
    <property type="match status" value="1"/>
</dbReference>
<evidence type="ECO:0000305" key="1"/>
<gene>
    <name type="primary">rpl32e</name>
    <name type="ordered locus">MA_1089</name>
</gene>
<keyword id="KW-1185">Reference proteome</keyword>
<keyword id="KW-0687">Ribonucleoprotein</keyword>
<keyword id="KW-0689">Ribosomal protein</keyword>
<comment type="similarity">
    <text evidence="1">Belongs to the eukaryotic ribosomal protein eL32 family.</text>
</comment>
<comment type="sequence caution" evidence="1">
    <conflict type="erroneous initiation">
        <sequence resource="EMBL-CDS" id="AAM04514"/>
    </conflict>
</comment>
<proteinExistence type="inferred from homology"/>
<protein>
    <recommendedName>
        <fullName evidence="1">Large ribosomal subunit protein eL32</fullName>
    </recommendedName>
    <alternativeName>
        <fullName>50S ribosomal protein L32e</fullName>
    </alternativeName>
</protein>
<name>RL32_METAC</name>
<organism>
    <name type="scientific">Methanosarcina acetivorans (strain ATCC 35395 / DSM 2834 / JCM 12185 / C2A)</name>
    <dbReference type="NCBI Taxonomy" id="188937"/>
    <lineage>
        <taxon>Archaea</taxon>
        <taxon>Methanobacteriati</taxon>
        <taxon>Methanobacteriota</taxon>
        <taxon>Stenosarchaea group</taxon>
        <taxon>Methanomicrobia</taxon>
        <taxon>Methanosarcinales</taxon>
        <taxon>Methanosarcinaceae</taxon>
        <taxon>Methanosarcina</taxon>
    </lineage>
</organism>
<accession>Q8TRT0</accession>
<feature type="chain" id="PRO_0000131150" description="Large ribosomal subunit protein eL32">
    <location>
        <begin position="1"/>
        <end position="129"/>
    </location>
</feature>
<reference key="1">
    <citation type="journal article" date="2002" name="Genome Res.">
        <title>The genome of Methanosarcina acetivorans reveals extensive metabolic and physiological diversity.</title>
        <authorList>
            <person name="Galagan J.E."/>
            <person name="Nusbaum C."/>
            <person name="Roy A."/>
            <person name="Endrizzi M.G."/>
            <person name="Macdonald P."/>
            <person name="FitzHugh W."/>
            <person name="Calvo S."/>
            <person name="Engels R."/>
            <person name="Smirnov S."/>
            <person name="Atnoor D."/>
            <person name="Brown A."/>
            <person name="Allen N."/>
            <person name="Naylor J."/>
            <person name="Stange-Thomann N."/>
            <person name="DeArellano K."/>
            <person name="Johnson R."/>
            <person name="Linton L."/>
            <person name="McEwan P."/>
            <person name="McKernan K."/>
            <person name="Talamas J."/>
            <person name="Tirrell A."/>
            <person name="Ye W."/>
            <person name="Zimmer A."/>
            <person name="Barber R.D."/>
            <person name="Cann I."/>
            <person name="Graham D.E."/>
            <person name="Grahame D.A."/>
            <person name="Guss A.M."/>
            <person name="Hedderich R."/>
            <person name="Ingram-Smith C."/>
            <person name="Kuettner H.C."/>
            <person name="Krzycki J.A."/>
            <person name="Leigh J.A."/>
            <person name="Li W."/>
            <person name="Liu J."/>
            <person name="Mukhopadhyay B."/>
            <person name="Reeve J.N."/>
            <person name="Smith K."/>
            <person name="Springer T.A."/>
            <person name="Umayam L.A."/>
            <person name="White O."/>
            <person name="White R.H."/>
            <person name="de Macario E.C."/>
            <person name="Ferry J.G."/>
            <person name="Jarrell K.F."/>
            <person name="Jing H."/>
            <person name="Macario A.J.L."/>
            <person name="Paulsen I.T."/>
            <person name="Pritchett M."/>
            <person name="Sowers K.R."/>
            <person name="Swanson R.V."/>
            <person name="Zinder S.H."/>
            <person name="Lander E."/>
            <person name="Metcalf W.W."/>
            <person name="Birren B."/>
        </authorList>
    </citation>
    <scope>NUCLEOTIDE SEQUENCE [LARGE SCALE GENOMIC DNA]</scope>
    <source>
        <strain>ATCC 35395 / DSM 2834 / JCM 12185 / C2A</strain>
    </source>
</reference>